<feature type="propeptide" id="PRO_0000026046" description="Activation peptide">
    <location>
        <begin position="1"/>
        <end position="42"/>
    </location>
</feature>
<feature type="chain" id="PRO_0000026047" description="Pepsin A">
    <location>
        <begin position="43"/>
        <end position="367"/>
    </location>
</feature>
<feature type="domain" description="Peptidase A1" evidence="1">
    <location>
        <begin position="59"/>
        <end position="364"/>
    </location>
</feature>
<feature type="active site">
    <location>
        <position position="77"/>
    </location>
</feature>
<feature type="active site">
    <location>
        <position position="260"/>
    </location>
</feature>
<feature type="glycosylation site" description="N-linked (GlcNAc...) asparagine">
    <location>
        <position position="113"/>
    </location>
</feature>
<feature type="disulfide bond">
    <location>
        <begin position="90"/>
        <end position="95"/>
    </location>
</feature>
<feature type="disulfide bond">
    <location>
        <begin position="251"/>
        <end position="255"/>
    </location>
</feature>
<feature type="disulfide bond">
    <location>
        <begin position="290"/>
        <end position="323"/>
    </location>
</feature>
<name>PEPA_CHICK</name>
<gene>
    <name type="primary">PGA</name>
</gene>
<protein>
    <recommendedName>
        <fullName>Pepsin A</fullName>
        <ecNumber>3.4.23.1</ecNumber>
    </recommendedName>
</protein>
<comment type="function">
    <text>Shows particularly broad specificity; although bonds involving phenylalanine and leucine are preferred, many others are also cleaved to some extent.</text>
</comment>
<comment type="catalytic activity">
    <reaction evidence="2">
        <text>Preferential cleavage: hydrophobic, preferably aromatic, residues in P1 and P1' positions. Cleaves 1-Phe-|-Val-2, 4-Gln-|-His-5, 13-Glu-|-Ala-14, 14-Ala-|-Leu-15, 15-Leu-|-Tyr-16, 16-Tyr-|-Leu-17, 23-Gly-|-Phe-24, 24-Phe-|-Phe-25 and 25-Phe-|-Tyr-26 bonds in the B chain of insulin.</text>
        <dbReference type="EC" id="3.4.23.1"/>
    </reaction>
</comment>
<comment type="similarity">
    <text evidence="3">Belongs to the peptidase A1 family.</text>
</comment>
<keyword id="KW-0064">Aspartyl protease</keyword>
<keyword id="KW-0222">Digestion</keyword>
<keyword id="KW-0903">Direct protein sequencing</keyword>
<keyword id="KW-1015">Disulfide bond</keyword>
<keyword id="KW-0325">Glycoprotein</keyword>
<keyword id="KW-0378">Hydrolase</keyword>
<keyword id="KW-0645">Protease</keyword>
<keyword id="KW-1185">Reference proteome</keyword>
<keyword id="KW-0865">Zymogen</keyword>
<dbReference type="EC" id="3.4.23.1"/>
<dbReference type="SMR" id="P00793"/>
<dbReference type="STRING" id="9031.ENSGALP00000052006"/>
<dbReference type="GlyCosmos" id="P00793">
    <property type="glycosylation" value="1 site, No reported glycans"/>
</dbReference>
<dbReference type="GlyGen" id="P00793">
    <property type="glycosylation" value="1 site"/>
</dbReference>
<dbReference type="PaxDb" id="9031-ENSGALP00000034609"/>
<dbReference type="VEuPathDB" id="HostDB:geneid_395691"/>
<dbReference type="eggNOG" id="KOG1339">
    <property type="taxonomic scope" value="Eukaryota"/>
</dbReference>
<dbReference type="InParanoid" id="P00793"/>
<dbReference type="Proteomes" id="UP000000539">
    <property type="component" value="Unassembled WGS sequence"/>
</dbReference>
<dbReference type="GO" id="GO:0004190">
    <property type="term" value="F:aspartic-type endopeptidase activity"/>
    <property type="evidence" value="ECO:0000318"/>
    <property type="project" value="GO_Central"/>
</dbReference>
<dbReference type="GO" id="GO:0007586">
    <property type="term" value="P:digestion"/>
    <property type="evidence" value="ECO:0007669"/>
    <property type="project" value="UniProtKB-KW"/>
</dbReference>
<dbReference type="GO" id="GO:0006508">
    <property type="term" value="P:proteolysis"/>
    <property type="evidence" value="ECO:0000318"/>
    <property type="project" value="GO_Central"/>
</dbReference>
<dbReference type="CDD" id="cd05478">
    <property type="entry name" value="pepsin_A"/>
    <property type="match status" value="1"/>
</dbReference>
<dbReference type="FunFam" id="2.40.70.10:FF:000004">
    <property type="entry name" value="Pepsin A"/>
    <property type="match status" value="1"/>
</dbReference>
<dbReference type="Gene3D" id="6.10.140.60">
    <property type="match status" value="1"/>
</dbReference>
<dbReference type="Gene3D" id="2.40.70.10">
    <property type="entry name" value="Acid Proteases"/>
    <property type="match status" value="2"/>
</dbReference>
<dbReference type="InterPro" id="IPR001461">
    <property type="entry name" value="Aspartic_peptidase_A1"/>
</dbReference>
<dbReference type="InterPro" id="IPR001969">
    <property type="entry name" value="Aspartic_peptidase_AS"/>
</dbReference>
<dbReference type="InterPro" id="IPR012848">
    <property type="entry name" value="Aspartic_peptidase_N"/>
</dbReference>
<dbReference type="InterPro" id="IPR034162">
    <property type="entry name" value="Pepsin_A"/>
</dbReference>
<dbReference type="InterPro" id="IPR033121">
    <property type="entry name" value="PEPTIDASE_A1"/>
</dbReference>
<dbReference type="InterPro" id="IPR021109">
    <property type="entry name" value="Peptidase_aspartic_dom_sf"/>
</dbReference>
<dbReference type="PANTHER" id="PTHR47966">
    <property type="entry name" value="BETA-SITE APP-CLEAVING ENZYME, ISOFORM A-RELATED"/>
    <property type="match status" value="1"/>
</dbReference>
<dbReference type="PANTHER" id="PTHR47966:SF22">
    <property type="entry name" value="PEPSIN A-3-RELATED"/>
    <property type="match status" value="1"/>
</dbReference>
<dbReference type="Pfam" id="PF07966">
    <property type="entry name" value="A1_Propeptide"/>
    <property type="match status" value="1"/>
</dbReference>
<dbReference type="Pfam" id="PF00026">
    <property type="entry name" value="Asp"/>
    <property type="match status" value="1"/>
</dbReference>
<dbReference type="PRINTS" id="PR00792">
    <property type="entry name" value="PEPSIN"/>
</dbReference>
<dbReference type="SUPFAM" id="SSF50630">
    <property type="entry name" value="Acid proteases"/>
    <property type="match status" value="1"/>
</dbReference>
<dbReference type="PROSITE" id="PS00141">
    <property type="entry name" value="ASP_PROTEASE"/>
    <property type="match status" value="2"/>
</dbReference>
<dbReference type="PROSITE" id="PS51767">
    <property type="entry name" value="PEPTIDASE_A1"/>
    <property type="match status" value="1"/>
</dbReference>
<reference key="1">
    <citation type="journal article" date="1983" name="Eur. J. Biochem.">
        <title>Covalent structure of chicken pepsinogen.</title>
        <authorList>
            <person name="Baudys M."/>
            <person name="Kostka V."/>
        </authorList>
    </citation>
    <scope>PROTEIN SEQUENCE</scope>
</reference>
<sequence length="367" mass="40432">SIHRVPLKKGKSLRKQLKDHGLLEDFLKKHPYNPASKYHPVLTATESYEPMTNYMDASYYGTISIGTPQQDFSVIFDTGSSNLWVPSIYCKSSACSNHKRFDPSKSSTYVSTNETVYIAYGTGSMSGILGYDTVAVSSIDVQNQIFGLSETEPGSFFYYCNFDGILGLAFPSISSSGATPVFDNMMSQHLVAQDLFSVYLSKDGETGSFVLFGGIDPNYTTKGIYWVPLSAETYWQITMDRVTVGNKYVACFFTCQAIVDTGTSLLVMPQGAYNRIIKDLGVSSDGEISCDDISKLPDVTFHINGHAFTLPASAYVLNEDGSCMLGFENMGTPTELGEQWILGDVFIREYYVIFDRANNKVGLSPLS</sequence>
<evidence type="ECO:0000255" key="1">
    <source>
        <dbReference type="PROSITE-ProRule" id="PRU01103"/>
    </source>
</evidence>
<evidence type="ECO:0000255" key="2">
    <source>
        <dbReference type="PROSITE-ProRule" id="PRU10094"/>
    </source>
</evidence>
<evidence type="ECO:0000305" key="3"/>
<proteinExistence type="evidence at protein level"/>
<accession>P00793</accession>
<organism>
    <name type="scientific">Gallus gallus</name>
    <name type="common">Chicken</name>
    <dbReference type="NCBI Taxonomy" id="9031"/>
    <lineage>
        <taxon>Eukaryota</taxon>
        <taxon>Metazoa</taxon>
        <taxon>Chordata</taxon>
        <taxon>Craniata</taxon>
        <taxon>Vertebrata</taxon>
        <taxon>Euteleostomi</taxon>
        <taxon>Archelosauria</taxon>
        <taxon>Archosauria</taxon>
        <taxon>Dinosauria</taxon>
        <taxon>Saurischia</taxon>
        <taxon>Theropoda</taxon>
        <taxon>Coelurosauria</taxon>
        <taxon>Aves</taxon>
        <taxon>Neognathae</taxon>
        <taxon>Galloanserae</taxon>
        <taxon>Galliformes</taxon>
        <taxon>Phasianidae</taxon>
        <taxon>Phasianinae</taxon>
        <taxon>Gallus</taxon>
    </lineage>
</organism>